<keyword id="KW-1003">Cell membrane</keyword>
<keyword id="KW-0325">Glycoprotein</keyword>
<keyword id="KW-0472">Membrane</keyword>
<keyword id="KW-1185">Reference proteome</keyword>
<keyword id="KW-0812">Transmembrane</keyword>
<keyword id="KW-1133">Transmembrane helix</keyword>
<organism>
    <name type="scientific">Arabidopsis thaliana</name>
    <name type="common">Mouse-ear cress</name>
    <dbReference type="NCBI Taxonomy" id="3702"/>
    <lineage>
        <taxon>Eukaryota</taxon>
        <taxon>Viridiplantae</taxon>
        <taxon>Streptophyta</taxon>
        <taxon>Embryophyta</taxon>
        <taxon>Tracheophyta</taxon>
        <taxon>Spermatophyta</taxon>
        <taxon>Magnoliopsida</taxon>
        <taxon>eudicotyledons</taxon>
        <taxon>Gunneridae</taxon>
        <taxon>Pentapetalae</taxon>
        <taxon>rosids</taxon>
        <taxon>malvids</taxon>
        <taxon>Brassicales</taxon>
        <taxon>Brassicaceae</taxon>
        <taxon>Camelineae</taxon>
        <taxon>Arabidopsis</taxon>
    </lineage>
</organism>
<sequence>MKELKDHVVVITYGPSSEASVTASPVSQQTPSLFAYSVTPSASRFSSRRASVHVIGLVLRFITMVLCFVSALSLAVNVQRPSKRHLTQNSSSFASYPELLYCFGVAVIGFVYTSLQTFKGVCDITHRGVLISEPLSDYISFIFDQVICYLLVSSSSVAIAWIQHINEDAIKTLRNNSIVSVSMSFSAFLVLTLSGLLSGYKLCKRFMW</sequence>
<evidence type="ECO:0000250" key="1"/>
<evidence type="ECO:0000255" key="2"/>
<evidence type="ECO:0000305" key="3"/>
<gene>
    <name type="ordered locus">At4g11655</name>
    <name type="ORF">T5C23.2</name>
</gene>
<name>CSPLL_ARATH</name>
<proteinExistence type="evidence at transcript level"/>
<dbReference type="EMBL" id="AL049500">
    <property type="status" value="NOT_ANNOTATED_CDS"/>
    <property type="molecule type" value="Genomic_DNA"/>
</dbReference>
<dbReference type="EMBL" id="CP002687">
    <property type="protein sequence ID" value="AEE83035.1"/>
    <property type="molecule type" value="Genomic_DNA"/>
</dbReference>
<dbReference type="EMBL" id="AY299293">
    <property type="status" value="NOT_ANNOTATED_CDS"/>
    <property type="molecule type" value="mRNA"/>
</dbReference>
<dbReference type="RefSeq" id="NP_974535.1">
    <property type="nucleotide sequence ID" value="NM_202806.2"/>
</dbReference>
<dbReference type="GlyGen" id="Q3EA54">
    <property type="glycosylation" value="3 sites"/>
</dbReference>
<dbReference type="PaxDb" id="3702-AT4G11655.1"/>
<dbReference type="EnsemblPlants" id="AT4G11655.1">
    <property type="protein sequence ID" value="AT4G11655.1"/>
    <property type="gene ID" value="AT4G11655"/>
</dbReference>
<dbReference type="GeneID" id="2745700"/>
<dbReference type="Gramene" id="AT4G11655.1">
    <property type="protein sequence ID" value="AT4G11655.1"/>
    <property type="gene ID" value="AT4G11655"/>
</dbReference>
<dbReference type="KEGG" id="ath:AT4G11655"/>
<dbReference type="Araport" id="AT4G11655"/>
<dbReference type="TAIR" id="AT4G11655">
    <property type="gene designation" value="CASPL4A4"/>
</dbReference>
<dbReference type="eggNOG" id="ENOG502S2TM">
    <property type="taxonomic scope" value="Eukaryota"/>
</dbReference>
<dbReference type="HOGENOM" id="CLU_1306411_0_0_1"/>
<dbReference type="InParanoid" id="Q3EA54"/>
<dbReference type="OMA" id="VAIAWIQ"/>
<dbReference type="PhylomeDB" id="Q3EA54"/>
<dbReference type="PRO" id="PR:Q3EA54"/>
<dbReference type="Proteomes" id="UP000006548">
    <property type="component" value="Chromosome 4"/>
</dbReference>
<dbReference type="ExpressionAtlas" id="Q3EA54">
    <property type="expression patterns" value="baseline and differential"/>
</dbReference>
<dbReference type="GO" id="GO:0005886">
    <property type="term" value="C:plasma membrane"/>
    <property type="evidence" value="ECO:0007669"/>
    <property type="project" value="UniProtKB-SubCell"/>
</dbReference>
<dbReference type="InterPro" id="IPR006702">
    <property type="entry name" value="CASP_dom"/>
</dbReference>
<dbReference type="PANTHER" id="PTHR33573">
    <property type="entry name" value="CASP-LIKE PROTEIN 4A4"/>
    <property type="match status" value="1"/>
</dbReference>
<dbReference type="PANTHER" id="PTHR33573:SF15">
    <property type="entry name" value="CASP-LIKE PROTEIN 4A4"/>
    <property type="match status" value="1"/>
</dbReference>
<dbReference type="Pfam" id="PF04535">
    <property type="entry name" value="CASP_dom"/>
    <property type="match status" value="1"/>
</dbReference>
<feature type="chain" id="PRO_0000308674" description="CASP-like protein 4A4">
    <location>
        <begin position="1"/>
        <end position="208"/>
    </location>
</feature>
<feature type="topological domain" description="Cytoplasmic" evidence="2">
    <location>
        <begin position="1"/>
        <end position="53"/>
    </location>
</feature>
<feature type="transmembrane region" description="Helical" evidence="2">
    <location>
        <begin position="54"/>
        <end position="74"/>
    </location>
</feature>
<feature type="topological domain" description="Extracellular" evidence="2">
    <location>
        <begin position="75"/>
        <end position="92"/>
    </location>
</feature>
<feature type="transmembrane region" description="Helical" evidence="2">
    <location>
        <begin position="93"/>
        <end position="113"/>
    </location>
</feature>
<feature type="topological domain" description="Cytoplasmic" evidence="2">
    <location>
        <begin position="114"/>
        <end position="141"/>
    </location>
</feature>
<feature type="transmembrane region" description="Helical" evidence="2">
    <location>
        <begin position="142"/>
        <end position="162"/>
    </location>
</feature>
<feature type="topological domain" description="Extracellular" evidence="2">
    <location>
        <begin position="163"/>
        <end position="176"/>
    </location>
</feature>
<feature type="transmembrane region" description="Helical" evidence="2">
    <location>
        <begin position="177"/>
        <end position="197"/>
    </location>
</feature>
<feature type="topological domain" description="Cytoplasmic" evidence="2">
    <location>
        <begin position="198"/>
        <end position="208"/>
    </location>
</feature>
<feature type="glycosylation site" description="N-linked (GlcNAc...) asparagine" evidence="2">
    <location>
        <position position="89"/>
    </location>
</feature>
<feature type="glycosylation site" description="N-linked (GlcNAc...) asparagine" evidence="2">
    <location>
        <position position="175"/>
    </location>
</feature>
<comment type="subunit">
    <text evidence="1">Homodimer and heterodimers.</text>
</comment>
<comment type="subcellular location">
    <subcellularLocation>
        <location evidence="1">Cell membrane</location>
        <topology evidence="1">Multi-pass membrane protein</topology>
    </subcellularLocation>
</comment>
<comment type="similarity">
    <text evidence="3">Belongs to the Casparian strip membrane proteins (CASP) family.</text>
</comment>
<reference key="1">
    <citation type="journal article" date="1999" name="Nature">
        <title>Sequence and analysis of chromosome 4 of the plant Arabidopsis thaliana.</title>
        <authorList>
            <person name="Mayer K.F.X."/>
            <person name="Schueller C."/>
            <person name="Wambutt R."/>
            <person name="Murphy G."/>
            <person name="Volckaert G."/>
            <person name="Pohl T."/>
            <person name="Duesterhoeft A."/>
            <person name="Stiekema W."/>
            <person name="Entian K.-D."/>
            <person name="Terryn N."/>
            <person name="Harris B."/>
            <person name="Ansorge W."/>
            <person name="Brandt P."/>
            <person name="Grivell L.A."/>
            <person name="Rieger M."/>
            <person name="Weichselgartner M."/>
            <person name="de Simone V."/>
            <person name="Obermaier B."/>
            <person name="Mache R."/>
            <person name="Mueller M."/>
            <person name="Kreis M."/>
            <person name="Delseny M."/>
            <person name="Puigdomenech P."/>
            <person name="Watson M."/>
            <person name="Schmidtheini T."/>
            <person name="Reichert B."/>
            <person name="Portetelle D."/>
            <person name="Perez-Alonso M."/>
            <person name="Boutry M."/>
            <person name="Bancroft I."/>
            <person name="Vos P."/>
            <person name="Hoheisel J."/>
            <person name="Zimmermann W."/>
            <person name="Wedler H."/>
            <person name="Ridley P."/>
            <person name="Langham S.-A."/>
            <person name="McCullagh B."/>
            <person name="Bilham L."/>
            <person name="Robben J."/>
            <person name="van der Schueren J."/>
            <person name="Grymonprez B."/>
            <person name="Chuang Y.-J."/>
            <person name="Vandenbussche F."/>
            <person name="Braeken M."/>
            <person name="Weltjens I."/>
            <person name="Voet M."/>
            <person name="Bastiaens I."/>
            <person name="Aert R."/>
            <person name="Defoor E."/>
            <person name="Weitzenegger T."/>
            <person name="Bothe G."/>
            <person name="Ramsperger U."/>
            <person name="Hilbert H."/>
            <person name="Braun M."/>
            <person name="Holzer E."/>
            <person name="Brandt A."/>
            <person name="Peters S."/>
            <person name="van Staveren M."/>
            <person name="Dirkse W."/>
            <person name="Mooijman P."/>
            <person name="Klein Lankhorst R."/>
            <person name="Rose M."/>
            <person name="Hauf J."/>
            <person name="Koetter P."/>
            <person name="Berneiser S."/>
            <person name="Hempel S."/>
            <person name="Feldpausch M."/>
            <person name="Lamberth S."/>
            <person name="Van den Daele H."/>
            <person name="De Keyser A."/>
            <person name="Buysshaert C."/>
            <person name="Gielen J."/>
            <person name="Villarroel R."/>
            <person name="De Clercq R."/>
            <person name="van Montagu M."/>
            <person name="Rogers J."/>
            <person name="Cronin A."/>
            <person name="Quail M.A."/>
            <person name="Bray-Allen S."/>
            <person name="Clark L."/>
            <person name="Doggett J."/>
            <person name="Hall S."/>
            <person name="Kay M."/>
            <person name="Lennard N."/>
            <person name="McLay K."/>
            <person name="Mayes R."/>
            <person name="Pettett A."/>
            <person name="Rajandream M.A."/>
            <person name="Lyne M."/>
            <person name="Benes V."/>
            <person name="Rechmann S."/>
            <person name="Borkova D."/>
            <person name="Bloecker H."/>
            <person name="Scharfe M."/>
            <person name="Grimm M."/>
            <person name="Loehnert T.-H."/>
            <person name="Dose S."/>
            <person name="de Haan M."/>
            <person name="Maarse A.C."/>
            <person name="Schaefer M."/>
            <person name="Mueller-Auer S."/>
            <person name="Gabel C."/>
            <person name="Fuchs M."/>
            <person name="Fartmann B."/>
            <person name="Granderath K."/>
            <person name="Dauner D."/>
            <person name="Herzl A."/>
            <person name="Neumann S."/>
            <person name="Argiriou A."/>
            <person name="Vitale D."/>
            <person name="Liguori R."/>
            <person name="Piravandi E."/>
            <person name="Massenet O."/>
            <person name="Quigley F."/>
            <person name="Clabauld G."/>
            <person name="Muendlein A."/>
            <person name="Felber R."/>
            <person name="Schnabl S."/>
            <person name="Hiller R."/>
            <person name="Schmidt W."/>
            <person name="Lecharny A."/>
            <person name="Aubourg S."/>
            <person name="Chefdor F."/>
            <person name="Cooke R."/>
            <person name="Berger C."/>
            <person name="Monfort A."/>
            <person name="Casacuberta E."/>
            <person name="Gibbons T."/>
            <person name="Weber N."/>
            <person name="Vandenbol M."/>
            <person name="Bargues M."/>
            <person name="Terol J."/>
            <person name="Torres A."/>
            <person name="Perez-Perez A."/>
            <person name="Purnelle B."/>
            <person name="Bent E."/>
            <person name="Johnson S."/>
            <person name="Tacon D."/>
            <person name="Jesse T."/>
            <person name="Heijnen L."/>
            <person name="Schwarz S."/>
            <person name="Scholler P."/>
            <person name="Heber S."/>
            <person name="Francs P."/>
            <person name="Bielke C."/>
            <person name="Frishman D."/>
            <person name="Haase D."/>
            <person name="Lemcke K."/>
            <person name="Mewes H.-W."/>
            <person name="Stocker S."/>
            <person name="Zaccaria P."/>
            <person name="Bevan M."/>
            <person name="Wilson R.K."/>
            <person name="de la Bastide M."/>
            <person name="Habermann K."/>
            <person name="Parnell L."/>
            <person name="Dedhia N."/>
            <person name="Gnoj L."/>
            <person name="Schutz K."/>
            <person name="Huang E."/>
            <person name="Spiegel L."/>
            <person name="Sekhon M."/>
            <person name="Murray J."/>
            <person name="Sheet P."/>
            <person name="Cordes M."/>
            <person name="Abu-Threideh J."/>
            <person name="Stoneking T."/>
            <person name="Kalicki J."/>
            <person name="Graves T."/>
            <person name="Harmon G."/>
            <person name="Edwards J."/>
            <person name="Latreille P."/>
            <person name="Courtney L."/>
            <person name="Cloud J."/>
            <person name="Abbott A."/>
            <person name="Scott K."/>
            <person name="Johnson D."/>
            <person name="Minx P."/>
            <person name="Bentley D."/>
            <person name="Fulton B."/>
            <person name="Miller N."/>
            <person name="Greco T."/>
            <person name="Kemp K."/>
            <person name="Kramer J."/>
            <person name="Fulton L."/>
            <person name="Mardis E."/>
            <person name="Dante M."/>
            <person name="Pepin K."/>
            <person name="Hillier L.W."/>
            <person name="Nelson J."/>
            <person name="Spieth J."/>
            <person name="Ryan E."/>
            <person name="Andrews S."/>
            <person name="Geisel C."/>
            <person name="Layman D."/>
            <person name="Du H."/>
            <person name="Ali J."/>
            <person name="Berghoff A."/>
            <person name="Jones K."/>
            <person name="Drone K."/>
            <person name="Cotton M."/>
            <person name="Joshu C."/>
            <person name="Antonoiu B."/>
            <person name="Zidanic M."/>
            <person name="Strong C."/>
            <person name="Sun H."/>
            <person name="Lamar B."/>
            <person name="Yordan C."/>
            <person name="Ma P."/>
            <person name="Zhong J."/>
            <person name="Preston R."/>
            <person name="Vil D."/>
            <person name="Shekher M."/>
            <person name="Matero A."/>
            <person name="Shah R."/>
            <person name="Swaby I.K."/>
            <person name="O'Shaughnessy A."/>
            <person name="Rodriguez M."/>
            <person name="Hoffman J."/>
            <person name="Till S."/>
            <person name="Granat S."/>
            <person name="Shohdy N."/>
            <person name="Hasegawa A."/>
            <person name="Hameed A."/>
            <person name="Lodhi M."/>
            <person name="Johnson A."/>
            <person name="Chen E."/>
            <person name="Marra M.A."/>
            <person name="Martienssen R."/>
            <person name="McCombie W.R."/>
        </authorList>
    </citation>
    <scope>NUCLEOTIDE SEQUENCE [LARGE SCALE GENOMIC DNA]</scope>
    <source>
        <strain>cv. Columbia</strain>
    </source>
</reference>
<reference key="2">
    <citation type="journal article" date="2017" name="Plant J.">
        <title>Araport11: a complete reannotation of the Arabidopsis thaliana reference genome.</title>
        <authorList>
            <person name="Cheng C.Y."/>
            <person name="Krishnakumar V."/>
            <person name="Chan A.P."/>
            <person name="Thibaud-Nissen F."/>
            <person name="Schobel S."/>
            <person name="Town C.D."/>
        </authorList>
    </citation>
    <scope>GENOME REANNOTATION</scope>
    <source>
        <strain>cv. Columbia</strain>
    </source>
</reference>
<reference key="3">
    <citation type="journal article" date="2005" name="Genome Res.">
        <title>Whole genome shotgun sequencing of Brassica oleracea and its application to gene discovery and annotation in Arabidopsis.</title>
        <authorList>
            <person name="Ayele M."/>
            <person name="Haas B.J."/>
            <person name="Kumar N."/>
            <person name="Wu H."/>
            <person name="Xiao Y."/>
            <person name="Van Aken S."/>
            <person name="Utterback T.R."/>
            <person name="Wortman J.R."/>
            <person name="White O.R."/>
            <person name="Town C.D."/>
        </authorList>
    </citation>
    <scope>NUCLEOTIDE SEQUENCE [LARGE SCALE MRNA] OF 1-197</scope>
    <source>
        <strain>cv. Columbia</strain>
    </source>
</reference>
<reference key="4">
    <citation type="journal article" date="2014" name="Plant Physiol.">
        <title>Functional and evolutionary analysis of the CASPARIAN STRIP MEMBRANE DOMAIN PROTEIN family.</title>
        <authorList>
            <person name="Roppolo D."/>
            <person name="Boeckmann B."/>
            <person name="Pfister A."/>
            <person name="Boutet E."/>
            <person name="Rubio M.C."/>
            <person name="Denervaud-Tendon V."/>
            <person name="Vermeer J.E."/>
            <person name="Gheyselinck J."/>
            <person name="Xenarios I."/>
            <person name="Geldner N."/>
        </authorList>
    </citation>
    <scope>GENE FAMILY</scope>
    <scope>NOMENCLATURE</scope>
</reference>
<protein>
    <recommendedName>
        <fullName>CASP-like protein 4A4</fullName>
        <shortName>AtCASPL4A4</shortName>
    </recommendedName>
</protein>
<accession>Q3EA54</accession>